<sequence length="117" mass="13271">MSNIIKALEDEQLKQDLPKFAPGDTVVVQVKVKEGDRERLQAFEGVVIAIRNRGLHSAFTVRKISNGEGVERTFQTHSPVVNSIEVKRRGAVRRAKLYYLRERSGKSARIKEKLAKK</sequence>
<dbReference type="EMBL" id="CP000020">
    <property type="protein sequence ID" value="AAW85047.1"/>
    <property type="molecule type" value="Genomic_DNA"/>
</dbReference>
<dbReference type="RefSeq" id="WP_005417803.1">
    <property type="nucleotide sequence ID" value="NZ_CAWLES010000001.1"/>
</dbReference>
<dbReference type="RefSeq" id="YP_203935.1">
    <property type="nucleotide sequence ID" value="NC_006840.2"/>
</dbReference>
<dbReference type="SMR" id="Q5E7E9"/>
<dbReference type="STRING" id="312309.VF_0552"/>
<dbReference type="EnsemblBacteria" id="AAW85047">
    <property type="protein sequence ID" value="AAW85047"/>
    <property type="gene ID" value="VF_0552"/>
</dbReference>
<dbReference type="GeneID" id="54163201"/>
<dbReference type="KEGG" id="vfi:VF_0552"/>
<dbReference type="PATRIC" id="fig|312309.11.peg.545"/>
<dbReference type="eggNOG" id="COG0335">
    <property type="taxonomic scope" value="Bacteria"/>
</dbReference>
<dbReference type="HOGENOM" id="CLU_103507_2_1_6"/>
<dbReference type="OrthoDB" id="9803541at2"/>
<dbReference type="Proteomes" id="UP000000537">
    <property type="component" value="Chromosome I"/>
</dbReference>
<dbReference type="GO" id="GO:0022625">
    <property type="term" value="C:cytosolic large ribosomal subunit"/>
    <property type="evidence" value="ECO:0007669"/>
    <property type="project" value="TreeGrafter"/>
</dbReference>
<dbReference type="GO" id="GO:0003735">
    <property type="term" value="F:structural constituent of ribosome"/>
    <property type="evidence" value="ECO:0007669"/>
    <property type="project" value="InterPro"/>
</dbReference>
<dbReference type="GO" id="GO:0006412">
    <property type="term" value="P:translation"/>
    <property type="evidence" value="ECO:0007669"/>
    <property type="project" value="UniProtKB-UniRule"/>
</dbReference>
<dbReference type="FunFam" id="2.30.30.790:FF:000001">
    <property type="entry name" value="50S ribosomal protein L19"/>
    <property type="match status" value="1"/>
</dbReference>
<dbReference type="Gene3D" id="2.30.30.790">
    <property type="match status" value="1"/>
</dbReference>
<dbReference type="HAMAP" id="MF_00402">
    <property type="entry name" value="Ribosomal_bL19"/>
    <property type="match status" value="1"/>
</dbReference>
<dbReference type="InterPro" id="IPR001857">
    <property type="entry name" value="Ribosomal_bL19"/>
</dbReference>
<dbReference type="InterPro" id="IPR018257">
    <property type="entry name" value="Ribosomal_bL19_CS"/>
</dbReference>
<dbReference type="InterPro" id="IPR038657">
    <property type="entry name" value="Ribosomal_bL19_sf"/>
</dbReference>
<dbReference type="InterPro" id="IPR008991">
    <property type="entry name" value="Translation_prot_SH3-like_sf"/>
</dbReference>
<dbReference type="NCBIfam" id="TIGR01024">
    <property type="entry name" value="rplS_bact"/>
    <property type="match status" value="1"/>
</dbReference>
<dbReference type="PANTHER" id="PTHR15680:SF9">
    <property type="entry name" value="LARGE RIBOSOMAL SUBUNIT PROTEIN BL19M"/>
    <property type="match status" value="1"/>
</dbReference>
<dbReference type="PANTHER" id="PTHR15680">
    <property type="entry name" value="RIBOSOMAL PROTEIN L19"/>
    <property type="match status" value="1"/>
</dbReference>
<dbReference type="Pfam" id="PF01245">
    <property type="entry name" value="Ribosomal_L19"/>
    <property type="match status" value="1"/>
</dbReference>
<dbReference type="PIRSF" id="PIRSF002191">
    <property type="entry name" value="Ribosomal_L19"/>
    <property type="match status" value="1"/>
</dbReference>
<dbReference type="PRINTS" id="PR00061">
    <property type="entry name" value="RIBOSOMALL19"/>
</dbReference>
<dbReference type="SUPFAM" id="SSF50104">
    <property type="entry name" value="Translation proteins SH3-like domain"/>
    <property type="match status" value="1"/>
</dbReference>
<dbReference type="PROSITE" id="PS01015">
    <property type="entry name" value="RIBOSOMAL_L19"/>
    <property type="match status" value="1"/>
</dbReference>
<feature type="chain" id="PRO_0000226881" description="Large ribosomal subunit protein bL19">
    <location>
        <begin position="1"/>
        <end position="117"/>
    </location>
</feature>
<keyword id="KW-1185">Reference proteome</keyword>
<keyword id="KW-0687">Ribonucleoprotein</keyword>
<keyword id="KW-0689">Ribosomal protein</keyword>
<evidence type="ECO:0000255" key="1">
    <source>
        <dbReference type="HAMAP-Rule" id="MF_00402"/>
    </source>
</evidence>
<evidence type="ECO:0000305" key="2"/>
<organism>
    <name type="scientific">Aliivibrio fischeri (strain ATCC 700601 / ES114)</name>
    <name type="common">Vibrio fischeri</name>
    <dbReference type="NCBI Taxonomy" id="312309"/>
    <lineage>
        <taxon>Bacteria</taxon>
        <taxon>Pseudomonadati</taxon>
        <taxon>Pseudomonadota</taxon>
        <taxon>Gammaproteobacteria</taxon>
        <taxon>Vibrionales</taxon>
        <taxon>Vibrionaceae</taxon>
        <taxon>Aliivibrio</taxon>
    </lineage>
</organism>
<comment type="function">
    <text evidence="1">This protein is located at the 30S-50S ribosomal subunit interface and may play a role in the structure and function of the aminoacyl-tRNA binding site.</text>
</comment>
<comment type="similarity">
    <text evidence="1">Belongs to the bacterial ribosomal protein bL19 family.</text>
</comment>
<accession>Q5E7E9</accession>
<name>RL19_ALIF1</name>
<protein>
    <recommendedName>
        <fullName evidence="1">Large ribosomal subunit protein bL19</fullName>
    </recommendedName>
    <alternativeName>
        <fullName evidence="2">50S ribosomal protein L19</fullName>
    </alternativeName>
</protein>
<gene>
    <name evidence="1" type="primary">rplS</name>
    <name type="ordered locus">VF_0552</name>
</gene>
<reference key="1">
    <citation type="journal article" date="2005" name="Proc. Natl. Acad. Sci. U.S.A.">
        <title>Complete genome sequence of Vibrio fischeri: a symbiotic bacterium with pathogenic congeners.</title>
        <authorList>
            <person name="Ruby E.G."/>
            <person name="Urbanowski M."/>
            <person name="Campbell J."/>
            <person name="Dunn A."/>
            <person name="Faini M."/>
            <person name="Gunsalus R."/>
            <person name="Lostroh P."/>
            <person name="Lupp C."/>
            <person name="McCann J."/>
            <person name="Millikan D."/>
            <person name="Schaefer A."/>
            <person name="Stabb E."/>
            <person name="Stevens A."/>
            <person name="Visick K."/>
            <person name="Whistler C."/>
            <person name="Greenberg E.P."/>
        </authorList>
    </citation>
    <scope>NUCLEOTIDE SEQUENCE [LARGE SCALE GENOMIC DNA]</scope>
    <source>
        <strain>ATCC 700601 / ES114</strain>
    </source>
</reference>
<proteinExistence type="inferred from homology"/>